<dbReference type="EC" id="3.6.4.-" evidence="1"/>
<dbReference type="EMBL" id="U27980">
    <property type="protein sequence ID" value="AAB39403.1"/>
    <property type="molecule type" value="Genomic_DNA"/>
</dbReference>
<dbReference type="EMBL" id="AB025604">
    <property type="protein sequence ID" value="BAA97473.1"/>
    <property type="molecule type" value="Genomic_DNA"/>
</dbReference>
<dbReference type="EMBL" id="CP002688">
    <property type="protein sequence ID" value="AED97176.1"/>
    <property type="molecule type" value="Genomic_DNA"/>
</dbReference>
<dbReference type="EMBL" id="CP002688">
    <property type="protein sequence ID" value="AED97177.1"/>
    <property type="molecule type" value="Genomic_DNA"/>
</dbReference>
<dbReference type="EMBL" id="AY088111">
    <property type="protein sequence ID" value="AAM65657.1"/>
    <property type="molecule type" value="mRNA"/>
</dbReference>
<dbReference type="PIR" id="S68108">
    <property type="entry name" value="S68108"/>
</dbReference>
<dbReference type="RefSeq" id="NP_001078769.1">
    <property type="nucleotide sequence ID" value="NM_001085300.1"/>
</dbReference>
<dbReference type="RefSeq" id="NP_200745.1">
    <property type="nucleotide sequence ID" value="NM_125328.4"/>
</dbReference>
<dbReference type="SMR" id="P53494"/>
<dbReference type="FunCoup" id="P53494">
    <property type="interactions" value="1616"/>
</dbReference>
<dbReference type="STRING" id="3702.P53494"/>
<dbReference type="PaxDb" id="3702-AT5G59370.2"/>
<dbReference type="ProteomicsDB" id="244794"/>
<dbReference type="EnsemblPlants" id="AT5G59370.1">
    <property type="protein sequence ID" value="AT5G59370.1"/>
    <property type="gene ID" value="AT5G59370"/>
</dbReference>
<dbReference type="EnsemblPlants" id="AT5G59370.2">
    <property type="protein sequence ID" value="AT5G59370.2"/>
    <property type="gene ID" value="AT5G59370"/>
</dbReference>
<dbReference type="GeneID" id="836056"/>
<dbReference type="Gramene" id="AT5G59370.1">
    <property type="protein sequence ID" value="AT5G59370.1"/>
    <property type="gene ID" value="AT5G59370"/>
</dbReference>
<dbReference type="Gramene" id="AT5G59370.2">
    <property type="protein sequence ID" value="AT5G59370.2"/>
    <property type="gene ID" value="AT5G59370"/>
</dbReference>
<dbReference type="KEGG" id="ath:AT5G59370"/>
<dbReference type="Araport" id="AT5G59370"/>
<dbReference type="TAIR" id="AT5G59370">
    <property type="gene designation" value="ACT4"/>
</dbReference>
<dbReference type="eggNOG" id="KOG0676">
    <property type="taxonomic scope" value="Eukaryota"/>
</dbReference>
<dbReference type="HOGENOM" id="CLU_027965_0_2_1"/>
<dbReference type="InParanoid" id="P53494"/>
<dbReference type="OMA" id="ERFCASE"/>
<dbReference type="OrthoDB" id="1026387at2759"/>
<dbReference type="PhylomeDB" id="P53494"/>
<dbReference type="PRO" id="PR:P53494"/>
<dbReference type="Proteomes" id="UP000006548">
    <property type="component" value="Chromosome 5"/>
</dbReference>
<dbReference type="ExpressionAtlas" id="P53494">
    <property type="expression patterns" value="baseline and differential"/>
</dbReference>
<dbReference type="GO" id="GO:0005856">
    <property type="term" value="C:cytoskeleton"/>
    <property type="evidence" value="ECO:0007669"/>
    <property type="project" value="UniProtKB-SubCell"/>
</dbReference>
<dbReference type="GO" id="GO:0005739">
    <property type="term" value="C:mitochondrion"/>
    <property type="evidence" value="ECO:0007005"/>
    <property type="project" value="TAIR"/>
</dbReference>
<dbReference type="GO" id="GO:0009536">
    <property type="term" value="C:plastid"/>
    <property type="evidence" value="ECO:0007005"/>
    <property type="project" value="TAIR"/>
</dbReference>
<dbReference type="GO" id="GO:0005524">
    <property type="term" value="F:ATP binding"/>
    <property type="evidence" value="ECO:0007669"/>
    <property type="project" value="UniProtKB-KW"/>
</dbReference>
<dbReference type="GO" id="GO:0016787">
    <property type="term" value="F:hydrolase activity"/>
    <property type="evidence" value="ECO:0007669"/>
    <property type="project" value="UniProtKB-KW"/>
</dbReference>
<dbReference type="GO" id="GO:0005200">
    <property type="term" value="F:structural constituent of cytoskeleton"/>
    <property type="evidence" value="ECO:0000250"/>
    <property type="project" value="TAIR"/>
</dbReference>
<dbReference type="CDD" id="cd10224">
    <property type="entry name" value="ASKHA_NBD_actin"/>
    <property type="match status" value="1"/>
</dbReference>
<dbReference type="FunFam" id="2.30.36.70:FF:000001">
    <property type="entry name" value="Actin, alpha skeletal muscle"/>
    <property type="match status" value="1"/>
</dbReference>
<dbReference type="FunFam" id="3.30.420.40:FF:000050">
    <property type="entry name" value="Actin, alpha skeletal muscle"/>
    <property type="match status" value="1"/>
</dbReference>
<dbReference type="FunFam" id="3.30.420.40:FF:000205">
    <property type="entry name" value="Actin, alpha skeletal muscle"/>
    <property type="match status" value="1"/>
</dbReference>
<dbReference type="FunFam" id="3.30.420.40:FF:000291">
    <property type="entry name" value="Actin, alpha skeletal muscle"/>
    <property type="match status" value="1"/>
</dbReference>
<dbReference type="FunFam" id="3.90.640.10:FF:000001">
    <property type="entry name" value="Actin, muscle"/>
    <property type="match status" value="1"/>
</dbReference>
<dbReference type="Gene3D" id="3.30.420.40">
    <property type="match status" value="2"/>
</dbReference>
<dbReference type="Gene3D" id="3.90.640.10">
    <property type="entry name" value="Actin, Chain A, domain 4"/>
    <property type="match status" value="1"/>
</dbReference>
<dbReference type="InterPro" id="IPR004000">
    <property type="entry name" value="Actin"/>
</dbReference>
<dbReference type="InterPro" id="IPR020902">
    <property type="entry name" value="Actin/actin-like_CS"/>
</dbReference>
<dbReference type="InterPro" id="IPR004001">
    <property type="entry name" value="Actin_CS"/>
</dbReference>
<dbReference type="InterPro" id="IPR043129">
    <property type="entry name" value="ATPase_NBD"/>
</dbReference>
<dbReference type="PANTHER" id="PTHR11937">
    <property type="entry name" value="ACTIN"/>
    <property type="match status" value="1"/>
</dbReference>
<dbReference type="Pfam" id="PF00022">
    <property type="entry name" value="Actin"/>
    <property type="match status" value="1"/>
</dbReference>
<dbReference type="PRINTS" id="PR00190">
    <property type="entry name" value="ACTIN"/>
</dbReference>
<dbReference type="SMART" id="SM00268">
    <property type="entry name" value="ACTIN"/>
    <property type="match status" value="1"/>
</dbReference>
<dbReference type="SUPFAM" id="SSF53067">
    <property type="entry name" value="Actin-like ATPase domain"/>
    <property type="match status" value="2"/>
</dbReference>
<dbReference type="PROSITE" id="PS00406">
    <property type="entry name" value="ACTINS_1"/>
    <property type="match status" value="1"/>
</dbReference>
<dbReference type="PROSITE" id="PS00432">
    <property type="entry name" value="ACTINS_2"/>
    <property type="match status" value="1"/>
</dbReference>
<dbReference type="PROSITE" id="PS01132">
    <property type="entry name" value="ACTINS_ACT_LIKE"/>
    <property type="match status" value="1"/>
</dbReference>
<protein>
    <recommendedName>
        <fullName>Actin-4</fullName>
        <ecNumber evidence="1">3.6.4.-</ecNumber>
    </recommendedName>
</protein>
<accession>P53494</accession>
<evidence type="ECO:0000250" key="1">
    <source>
        <dbReference type="UniProtKB" id="P68137"/>
    </source>
</evidence>
<evidence type="ECO:0000250" key="2">
    <source>
        <dbReference type="UniProtKB" id="Q96292"/>
    </source>
</evidence>
<evidence type="ECO:0000305" key="3"/>
<proteinExistence type="evidence at protein level"/>
<name>ACT4_ARATH</name>
<sequence length="377" mass="41779">MADGEDIQPLVCDNGTGMVKAGFAGDDAPRAVFPSIVGRPRHTGVMVGMGQKDAYVGDEAQSKRGILTLKYPIEHGIVNNWDDMEKIWHHTFYNELRVAPEEHPVLLTEAPLNPKANREKMTQIMFETFNTPAMYVAIQAVLSLYASGRTTGIVLDSGDGVSHTVPIYEGYALPHAILRLDLAGRDLTDHLMKILTERGYSFTTTAEREIVRDMKEKLSYIALDFEQELETSKTSSSVEKSFELPDGQVITIGAERFRCPEVLFQPSMIGMENPGIHETTYNSIMKCDVDIRKDLYGNIVLSGGTTMFGGIGDRMSKEITALAPSSMKIKVVAPPERKYSVWIGGSILASLSTFQQMWIAKAEYDESGPSIVHRKCF</sequence>
<reference key="1">
    <citation type="journal article" date="1996" name="Plant J.">
        <title>The Arabidopsis thaliana ACT4/ACT12 actin gene subclass is strongly expressed throughout pollen development.</title>
        <authorList>
            <person name="Huang S."/>
            <person name="An Y.-Q."/>
            <person name="McDowell J.M."/>
            <person name="McKinney E.C."/>
            <person name="Meagher R.B."/>
        </authorList>
    </citation>
    <scope>NUCLEOTIDE SEQUENCE [GENOMIC DNA]</scope>
    <scope>CHARACTERIZATION</scope>
    <source>
        <strain>cv. Columbia</strain>
    </source>
</reference>
<reference key="2">
    <citation type="submission" date="1999-04" db="EMBL/GenBank/DDBJ databases">
        <title>Structural analysis of Arabidopsis thaliana chromosome 5. XI.</title>
        <authorList>
            <person name="Kaneko T."/>
            <person name="Katoh T."/>
            <person name="Asamizu E."/>
            <person name="Sato S."/>
            <person name="Nakamura Y."/>
            <person name="Kotani H."/>
            <person name="Tabata S."/>
        </authorList>
    </citation>
    <scope>NUCLEOTIDE SEQUENCE [LARGE SCALE GENOMIC DNA]</scope>
    <source>
        <strain>cv. Columbia</strain>
    </source>
</reference>
<reference key="3">
    <citation type="journal article" date="2017" name="Plant J.">
        <title>Araport11: a complete reannotation of the Arabidopsis thaliana reference genome.</title>
        <authorList>
            <person name="Cheng C.Y."/>
            <person name="Krishnakumar V."/>
            <person name="Chan A.P."/>
            <person name="Thibaud-Nissen F."/>
            <person name="Schobel S."/>
            <person name="Town C.D."/>
        </authorList>
    </citation>
    <scope>GENOME REANNOTATION</scope>
    <source>
        <strain>cv. Columbia</strain>
    </source>
</reference>
<reference key="4">
    <citation type="submission" date="2002-03" db="EMBL/GenBank/DDBJ databases">
        <title>Full-length cDNA from Arabidopsis thaliana.</title>
        <authorList>
            <person name="Brover V.V."/>
            <person name="Troukhan M.E."/>
            <person name="Alexandrov N.A."/>
            <person name="Lu Y.-P."/>
            <person name="Flavell R.B."/>
            <person name="Feldmann K.A."/>
        </authorList>
    </citation>
    <scope>NUCLEOTIDE SEQUENCE [LARGE SCALE MRNA]</scope>
</reference>
<reference key="5">
    <citation type="journal article" date="1996" name="Genetics">
        <title>Structure and evolution of the actin gene family in Arabidopsis thaliana.</title>
        <authorList>
            <person name="McDowell J.M."/>
            <person name="Huang S."/>
            <person name="McKinney E.C."/>
            <person name="An Y.-Q."/>
            <person name="Meagher R.B."/>
        </authorList>
    </citation>
    <scope>GENE FAMILY ORGANIZATION</scope>
    <scope>CHARACTERIZATION</scope>
    <source>
        <strain>cv. Columbia</strain>
    </source>
</reference>
<comment type="function">
    <text>Actins are highly conserved proteins that are involved in various types of cell motility and are ubiquitously expressed in all eukaryotic cells. Essential component of cell cytoskeleton; plays an important role in cytoplasmic streaming, cell shape determination, cell division, organelle movement and extension growth. This is considered as one of the reproductive actins.</text>
</comment>
<comment type="catalytic activity">
    <reaction evidence="1">
        <text>ATP + H2O = ADP + phosphate + H(+)</text>
        <dbReference type="Rhea" id="RHEA:13065"/>
        <dbReference type="ChEBI" id="CHEBI:15377"/>
        <dbReference type="ChEBI" id="CHEBI:15378"/>
        <dbReference type="ChEBI" id="CHEBI:30616"/>
        <dbReference type="ChEBI" id="CHEBI:43474"/>
        <dbReference type="ChEBI" id="CHEBI:456216"/>
    </reaction>
</comment>
<comment type="subunit">
    <text>Polymerization of globular actin (G-actin) leads to a structural filament (F-actin) in the form of a two-stranded helix. The binding of profilin to monomeric G-actin cause the sequestration of actin into profilactin complexes, and prevents the polymerization.</text>
</comment>
<comment type="subcellular location">
    <subcellularLocation>
        <location>Cytoplasm</location>
        <location>Cytoskeleton</location>
    </subcellularLocation>
</comment>
<comment type="tissue specificity">
    <text>Little or no reproductive-gene expression is detected in vegetative organs, such as root, stems, leaves, sepals and petals.</text>
</comment>
<comment type="developmental stage">
    <text>Expressed primarily in pollen.</text>
</comment>
<comment type="miscellaneous">
    <text>There are 8 actin genes in A.thaliana.</text>
</comment>
<comment type="similarity">
    <text evidence="3">Belongs to the actin family.</text>
</comment>
<keyword id="KW-0007">Acetylation</keyword>
<keyword id="KW-0067">ATP-binding</keyword>
<keyword id="KW-0963">Cytoplasm</keyword>
<keyword id="KW-0206">Cytoskeleton</keyword>
<keyword id="KW-0378">Hydrolase</keyword>
<keyword id="KW-0547">Nucleotide-binding</keyword>
<keyword id="KW-1185">Reference proteome</keyword>
<organism>
    <name type="scientific">Arabidopsis thaliana</name>
    <name type="common">Mouse-ear cress</name>
    <dbReference type="NCBI Taxonomy" id="3702"/>
    <lineage>
        <taxon>Eukaryota</taxon>
        <taxon>Viridiplantae</taxon>
        <taxon>Streptophyta</taxon>
        <taxon>Embryophyta</taxon>
        <taxon>Tracheophyta</taxon>
        <taxon>Spermatophyta</taxon>
        <taxon>Magnoliopsida</taxon>
        <taxon>eudicotyledons</taxon>
        <taxon>Gunneridae</taxon>
        <taxon>Pentapetalae</taxon>
        <taxon>rosids</taxon>
        <taxon>malvids</taxon>
        <taxon>Brassicales</taxon>
        <taxon>Brassicaceae</taxon>
        <taxon>Camelineae</taxon>
        <taxon>Arabidopsis</taxon>
    </lineage>
</organism>
<gene>
    <name type="primary">ACT4</name>
    <name type="ordered locus">At5g59370</name>
    <name type="ORF">F2O15.3</name>
</gene>
<feature type="initiator methionine" description="Removed" evidence="2">
    <location>
        <position position="1"/>
    </location>
</feature>
<feature type="chain" id="PRO_0000088890" description="Actin-4">
    <location>
        <begin position="2"/>
        <end position="377"/>
    </location>
</feature>
<feature type="modified residue" description="N-acetylalanine" evidence="2">
    <location>
        <position position="2"/>
    </location>
</feature>
<feature type="sequence conflict" description="In Ref. 4; AAM65657." evidence="3" ref="4">
    <original>V</original>
    <variation>F</variation>
    <location>
        <position position="154"/>
    </location>
</feature>